<evidence type="ECO:0000269" key="1">
    <source>
    </source>
</evidence>
<evidence type="ECO:0000269" key="2">
    <source>
    </source>
</evidence>
<feature type="chain" id="PRO_0000116634" description="Meiotically up-regulated gene 15 protein">
    <location>
        <begin position="1"/>
        <end position="133"/>
    </location>
</feature>
<comment type="function">
    <text evidence="1">Has a role in meiosis.</text>
</comment>
<comment type="subcellular location">
    <subcellularLocation>
        <location evidence="2">Cytoplasm</location>
    </subcellularLocation>
    <subcellularLocation>
        <location evidence="2">Nucleus</location>
    </subcellularLocation>
</comment>
<gene>
    <name type="primary">mug15</name>
    <name type="ORF">SPAC57A10.06</name>
</gene>
<name>MUG15_SCHPO</name>
<proteinExistence type="evidence at protein level"/>
<organism>
    <name type="scientific">Schizosaccharomyces pombe (strain 972 / ATCC 24843)</name>
    <name type="common">Fission yeast</name>
    <dbReference type="NCBI Taxonomy" id="284812"/>
    <lineage>
        <taxon>Eukaryota</taxon>
        <taxon>Fungi</taxon>
        <taxon>Dikarya</taxon>
        <taxon>Ascomycota</taxon>
        <taxon>Taphrinomycotina</taxon>
        <taxon>Schizosaccharomycetes</taxon>
        <taxon>Schizosaccharomycetales</taxon>
        <taxon>Schizosaccharomycetaceae</taxon>
        <taxon>Schizosaccharomyces</taxon>
    </lineage>
</organism>
<dbReference type="EMBL" id="CU329670">
    <property type="protein sequence ID" value="CAB08169.2"/>
    <property type="molecule type" value="Genomic_DNA"/>
</dbReference>
<dbReference type="PIR" id="T38933">
    <property type="entry name" value="T38933"/>
</dbReference>
<dbReference type="RefSeq" id="NP_593311.1">
    <property type="nucleotide sequence ID" value="NM_001018742.1"/>
</dbReference>
<dbReference type="BioGRID" id="278625">
    <property type="interactions" value="2"/>
</dbReference>
<dbReference type="PaxDb" id="4896-SPAC57A10.06.1"/>
<dbReference type="EnsemblFungi" id="SPAC57A10.06.1">
    <property type="protein sequence ID" value="SPAC57A10.06.1:pep"/>
    <property type="gene ID" value="SPAC57A10.06"/>
</dbReference>
<dbReference type="GeneID" id="2542149"/>
<dbReference type="KEGG" id="spo:2542149"/>
<dbReference type="PomBase" id="SPAC57A10.06">
    <property type="gene designation" value="mug15"/>
</dbReference>
<dbReference type="VEuPathDB" id="FungiDB:SPAC57A10.06"/>
<dbReference type="HOGENOM" id="CLU_1907897_0_0_1"/>
<dbReference type="InParanoid" id="P87054"/>
<dbReference type="OMA" id="VIQTCKS"/>
<dbReference type="PRO" id="PR:P87054"/>
<dbReference type="Proteomes" id="UP000002485">
    <property type="component" value="Chromosome I"/>
</dbReference>
<dbReference type="GO" id="GO:0005829">
    <property type="term" value="C:cytosol"/>
    <property type="evidence" value="ECO:0007005"/>
    <property type="project" value="PomBase"/>
</dbReference>
<dbReference type="GO" id="GO:0005634">
    <property type="term" value="C:nucleus"/>
    <property type="evidence" value="ECO:0007005"/>
    <property type="project" value="PomBase"/>
</dbReference>
<dbReference type="GO" id="GO:0051321">
    <property type="term" value="P:meiotic cell cycle"/>
    <property type="evidence" value="ECO:0007669"/>
    <property type="project" value="UniProtKB-KW"/>
</dbReference>
<accession>P87054</accession>
<protein>
    <recommendedName>
        <fullName>Meiotically up-regulated gene 15 protein</fullName>
    </recommendedName>
</protein>
<reference key="1">
    <citation type="journal article" date="2002" name="Nature">
        <title>The genome sequence of Schizosaccharomyces pombe.</title>
        <authorList>
            <person name="Wood V."/>
            <person name="Gwilliam R."/>
            <person name="Rajandream M.A."/>
            <person name="Lyne M.H."/>
            <person name="Lyne R."/>
            <person name="Stewart A."/>
            <person name="Sgouros J.G."/>
            <person name="Peat N."/>
            <person name="Hayles J."/>
            <person name="Baker S.G."/>
            <person name="Basham D."/>
            <person name="Bowman S."/>
            <person name="Brooks K."/>
            <person name="Brown D."/>
            <person name="Brown S."/>
            <person name="Chillingworth T."/>
            <person name="Churcher C.M."/>
            <person name="Collins M."/>
            <person name="Connor R."/>
            <person name="Cronin A."/>
            <person name="Davis P."/>
            <person name="Feltwell T."/>
            <person name="Fraser A."/>
            <person name="Gentles S."/>
            <person name="Goble A."/>
            <person name="Hamlin N."/>
            <person name="Harris D.E."/>
            <person name="Hidalgo J."/>
            <person name="Hodgson G."/>
            <person name="Holroyd S."/>
            <person name="Hornsby T."/>
            <person name="Howarth S."/>
            <person name="Huckle E.J."/>
            <person name="Hunt S."/>
            <person name="Jagels K."/>
            <person name="James K.D."/>
            <person name="Jones L."/>
            <person name="Jones M."/>
            <person name="Leather S."/>
            <person name="McDonald S."/>
            <person name="McLean J."/>
            <person name="Mooney P."/>
            <person name="Moule S."/>
            <person name="Mungall K.L."/>
            <person name="Murphy L.D."/>
            <person name="Niblett D."/>
            <person name="Odell C."/>
            <person name="Oliver K."/>
            <person name="O'Neil S."/>
            <person name="Pearson D."/>
            <person name="Quail M.A."/>
            <person name="Rabbinowitsch E."/>
            <person name="Rutherford K.M."/>
            <person name="Rutter S."/>
            <person name="Saunders D."/>
            <person name="Seeger K."/>
            <person name="Sharp S."/>
            <person name="Skelton J."/>
            <person name="Simmonds M.N."/>
            <person name="Squares R."/>
            <person name="Squares S."/>
            <person name="Stevens K."/>
            <person name="Taylor K."/>
            <person name="Taylor R.G."/>
            <person name="Tivey A."/>
            <person name="Walsh S.V."/>
            <person name="Warren T."/>
            <person name="Whitehead S."/>
            <person name="Woodward J.R."/>
            <person name="Volckaert G."/>
            <person name="Aert R."/>
            <person name="Robben J."/>
            <person name="Grymonprez B."/>
            <person name="Weltjens I."/>
            <person name="Vanstreels E."/>
            <person name="Rieger M."/>
            <person name="Schaefer M."/>
            <person name="Mueller-Auer S."/>
            <person name="Gabel C."/>
            <person name="Fuchs M."/>
            <person name="Duesterhoeft A."/>
            <person name="Fritzc C."/>
            <person name="Holzer E."/>
            <person name="Moestl D."/>
            <person name="Hilbert H."/>
            <person name="Borzym K."/>
            <person name="Langer I."/>
            <person name="Beck A."/>
            <person name="Lehrach H."/>
            <person name="Reinhardt R."/>
            <person name="Pohl T.M."/>
            <person name="Eger P."/>
            <person name="Zimmermann W."/>
            <person name="Wedler H."/>
            <person name="Wambutt R."/>
            <person name="Purnelle B."/>
            <person name="Goffeau A."/>
            <person name="Cadieu E."/>
            <person name="Dreano S."/>
            <person name="Gloux S."/>
            <person name="Lelaure V."/>
            <person name="Mottier S."/>
            <person name="Galibert F."/>
            <person name="Aves S.J."/>
            <person name="Xiang Z."/>
            <person name="Hunt C."/>
            <person name="Moore K."/>
            <person name="Hurst S.M."/>
            <person name="Lucas M."/>
            <person name="Rochet M."/>
            <person name="Gaillardin C."/>
            <person name="Tallada V.A."/>
            <person name="Garzon A."/>
            <person name="Thode G."/>
            <person name="Daga R.R."/>
            <person name="Cruzado L."/>
            <person name="Jimenez J."/>
            <person name="Sanchez M."/>
            <person name="del Rey F."/>
            <person name="Benito J."/>
            <person name="Dominguez A."/>
            <person name="Revuelta J.L."/>
            <person name="Moreno S."/>
            <person name="Armstrong J."/>
            <person name="Forsburg S.L."/>
            <person name="Cerutti L."/>
            <person name="Lowe T."/>
            <person name="McCombie W.R."/>
            <person name="Paulsen I."/>
            <person name="Potashkin J."/>
            <person name="Shpakovski G.V."/>
            <person name="Ussery D."/>
            <person name="Barrell B.G."/>
            <person name="Nurse P."/>
        </authorList>
    </citation>
    <scope>NUCLEOTIDE SEQUENCE [LARGE SCALE GENOMIC DNA]</scope>
    <source>
        <strain>972 / ATCC 24843</strain>
    </source>
</reference>
<reference key="2">
    <citation type="journal article" date="2005" name="Curr. Biol.">
        <title>A large-scale screen in S. pombe identifies seven novel genes required for critical meiotic events.</title>
        <authorList>
            <person name="Martin-Castellanos C."/>
            <person name="Blanco M."/>
            <person name="Rozalen A.E."/>
            <person name="Perez-Hidalgo L."/>
            <person name="Garcia A.I."/>
            <person name="Conde F."/>
            <person name="Mata J."/>
            <person name="Ellermeier C."/>
            <person name="Davis L."/>
            <person name="San-Segundo P."/>
            <person name="Smith G.R."/>
            <person name="Moreno S."/>
        </authorList>
    </citation>
    <scope>FUNCTION IN MEIOSIS</scope>
</reference>
<reference key="3">
    <citation type="journal article" date="2006" name="Nat. Biotechnol.">
        <title>ORFeome cloning and global analysis of protein localization in the fission yeast Schizosaccharomyces pombe.</title>
        <authorList>
            <person name="Matsuyama A."/>
            <person name="Arai R."/>
            <person name="Yashiroda Y."/>
            <person name="Shirai A."/>
            <person name="Kamata A."/>
            <person name="Sekido S."/>
            <person name="Kobayashi Y."/>
            <person name="Hashimoto A."/>
            <person name="Hamamoto M."/>
            <person name="Hiraoka Y."/>
            <person name="Horinouchi S."/>
            <person name="Yoshida M."/>
        </authorList>
    </citation>
    <scope>SUBCELLULAR LOCATION [LARGE SCALE ANALYSIS]</scope>
</reference>
<sequence length="133" mass="14646">MNVGDLKSANDLYESVRSIEGVTGVHLFRIRDAGILKSTMIPELDALTTISLDELNKSPTVFTKNLLQGCGGTDLDVPAELKRLVIFVCNILESCNEFTDLGSARLLRLTFDSCQLVIMYDSLFVVAITKDET</sequence>
<keyword id="KW-0963">Cytoplasm</keyword>
<keyword id="KW-0469">Meiosis</keyword>
<keyword id="KW-0539">Nucleus</keyword>
<keyword id="KW-1185">Reference proteome</keyword>